<reference key="1">
    <citation type="journal article" date="2004" name="J. Mol. Microbiol. Biotechnol.">
        <title>The complete genome sequence of Bacillus licheniformis DSM13, an organism with great industrial potential.</title>
        <authorList>
            <person name="Veith B."/>
            <person name="Herzberg C."/>
            <person name="Steckel S."/>
            <person name="Feesche J."/>
            <person name="Maurer K.H."/>
            <person name="Ehrenreich P."/>
            <person name="Baeumer S."/>
            <person name="Henne A."/>
            <person name="Liesegang H."/>
            <person name="Merkl R."/>
            <person name="Ehrenreich A."/>
            <person name="Gottschalk G."/>
        </authorList>
    </citation>
    <scope>NUCLEOTIDE SEQUENCE [LARGE SCALE GENOMIC DNA]</scope>
    <source>
        <strain>ATCC 14580 / DSM 13 / JCM 2505 / CCUG 7422 / NBRC 12200 / NCIMB 9375 / NCTC 10341 / NRRL NRS-1264 / Gibson 46</strain>
    </source>
</reference>
<reference key="2">
    <citation type="journal article" date="2004" name="Genome Biol.">
        <title>Complete genome sequence of the industrial bacterium Bacillus licheniformis and comparisons with closely related Bacillus species.</title>
        <authorList>
            <person name="Rey M.W."/>
            <person name="Ramaiya P."/>
            <person name="Nelson B.A."/>
            <person name="Brody-Karpin S.D."/>
            <person name="Zaretsky E.J."/>
            <person name="Tang M."/>
            <person name="Lopez de Leon A."/>
            <person name="Xiang H."/>
            <person name="Gusti V."/>
            <person name="Clausen I.G."/>
            <person name="Olsen P.B."/>
            <person name="Rasmussen M.D."/>
            <person name="Andersen J.T."/>
            <person name="Joergensen P.L."/>
            <person name="Larsen T.S."/>
            <person name="Sorokin A."/>
            <person name="Bolotin A."/>
            <person name="Lapidus A."/>
            <person name="Galleron N."/>
            <person name="Ehrlich S.D."/>
            <person name="Berka R.M."/>
        </authorList>
    </citation>
    <scope>NUCLEOTIDE SEQUENCE [LARGE SCALE GENOMIC DNA]</scope>
    <source>
        <strain>ATCC 14580 / DSM 13 / JCM 2505 / CCUG 7422 / NBRC 12200 / NCIMB 9375 / NCTC 10341 / NRRL NRS-1264 / Gibson 46</strain>
    </source>
</reference>
<protein>
    <recommendedName>
        <fullName evidence="1">Tyrosine--tRNA ligase 1</fullName>
        <ecNumber evidence="1">6.1.1.1</ecNumber>
    </recommendedName>
    <alternativeName>
        <fullName evidence="1">Tyrosyl-tRNA synthetase 1</fullName>
        <shortName evidence="1">TyrRS 1</shortName>
    </alternativeName>
</protein>
<proteinExistence type="inferred from homology"/>
<keyword id="KW-0030">Aminoacyl-tRNA synthetase</keyword>
<keyword id="KW-0067">ATP-binding</keyword>
<keyword id="KW-0963">Cytoplasm</keyword>
<keyword id="KW-0436">Ligase</keyword>
<keyword id="KW-0547">Nucleotide-binding</keyword>
<keyword id="KW-0648">Protein biosynthesis</keyword>
<keyword id="KW-1185">Reference proteome</keyword>
<keyword id="KW-0694">RNA-binding</keyword>
<feature type="chain" id="PRO_0000234675" description="Tyrosine--tRNA ligase 1">
    <location>
        <begin position="1"/>
        <end position="421"/>
    </location>
</feature>
<feature type="domain" description="S4 RNA-binding" evidence="1">
    <location>
        <begin position="354"/>
        <end position="420"/>
    </location>
</feature>
<feature type="short sequence motif" description="'HIGH' region">
    <location>
        <begin position="40"/>
        <end position="49"/>
    </location>
</feature>
<feature type="short sequence motif" description="'KMSKS' region">
    <location>
        <begin position="231"/>
        <end position="235"/>
    </location>
</feature>
<feature type="binding site" evidence="1">
    <location>
        <position position="35"/>
    </location>
    <ligand>
        <name>L-tyrosine</name>
        <dbReference type="ChEBI" id="CHEBI:58315"/>
    </ligand>
</feature>
<feature type="binding site" evidence="1">
    <location>
        <position position="170"/>
    </location>
    <ligand>
        <name>L-tyrosine</name>
        <dbReference type="ChEBI" id="CHEBI:58315"/>
    </ligand>
</feature>
<feature type="binding site" evidence="1">
    <location>
        <position position="174"/>
    </location>
    <ligand>
        <name>L-tyrosine</name>
        <dbReference type="ChEBI" id="CHEBI:58315"/>
    </ligand>
</feature>
<feature type="binding site" evidence="1">
    <location>
        <position position="234"/>
    </location>
    <ligand>
        <name>ATP</name>
        <dbReference type="ChEBI" id="CHEBI:30616"/>
    </ligand>
</feature>
<evidence type="ECO:0000255" key="1">
    <source>
        <dbReference type="HAMAP-Rule" id="MF_02006"/>
    </source>
</evidence>
<evidence type="ECO:0000305" key="2"/>
<accession>Q65G35</accession>
<accession>Q62RJ0</accession>
<sequence length="421" mass="47715">MTHILDDLSFRGLIQQQTDEAGLRELLDKEKISLYSGFDPTADSLHIGHLLPILMLRRFQLAGHRPIALVGGATGLIGDPSGKKAERTLNNEEIVREWSQKIKNQLSRFLDFEAEENPAIMANNYDWIGKMNVIDFLRDVGKNFGINYMLAKDTVSSRIETGISYTEFSYMILQSLDFLNLYRNQECKLQIGGSDQWGNITSGLELIRKSEENAKAFGLTIPLVTKADGTKFGKTEGGAIWLDKEKTSAYEFYQFWINTDDRDVVKYLKYFTFLSKEEIEDLAEKTETAPEKREAQKRLAEEVTVLVHGREAFEQAVNISKALFSGDIKQLTAEEVKVGFKGVPSLEVEKADELPLVEILVQSKLSPSKRQAREDITNGAVYVNGERRTDVADVLTADDRIEGQFTVIRRGKKKYFLLTYK</sequence>
<dbReference type="EC" id="6.1.1.1" evidence="1"/>
<dbReference type="EMBL" id="AE017333">
    <property type="protein sequence ID" value="AAU41979.1"/>
    <property type="status" value="ALT_INIT"/>
    <property type="molecule type" value="Genomic_DNA"/>
</dbReference>
<dbReference type="EMBL" id="CP000002">
    <property type="protein sequence ID" value="AAU24620.2"/>
    <property type="status" value="ALT_INIT"/>
    <property type="molecule type" value="Genomic_DNA"/>
</dbReference>
<dbReference type="SMR" id="Q65G35"/>
<dbReference type="STRING" id="279010.BL00439"/>
<dbReference type="KEGG" id="bld:BLi03118"/>
<dbReference type="KEGG" id="bli:BL00439"/>
<dbReference type="PATRIC" id="fig|279010.13.peg.3183"/>
<dbReference type="eggNOG" id="COG0162">
    <property type="taxonomic scope" value="Bacteria"/>
</dbReference>
<dbReference type="HOGENOM" id="CLU_024003_0_3_9"/>
<dbReference type="Proteomes" id="UP000000606">
    <property type="component" value="Chromosome"/>
</dbReference>
<dbReference type="GO" id="GO:0005829">
    <property type="term" value="C:cytosol"/>
    <property type="evidence" value="ECO:0007669"/>
    <property type="project" value="TreeGrafter"/>
</dbReference>
<dbReference type="GO" id="GO:0005524">
    <property type="term" value="F:ATP binding"/>
    <property type="evidence" value="ECO:0007669"/>
    <property type="project" value="UniProtKB-UniRule"/>
</dbReference>
<dbReference type="GO" id="GO:0003723">
    <property type="term" value="F:RNA binding"/>
    <property type="evidence" value="ECO:0007669"/>
    <property type="project" value="UniProtKB-KW"/>
</dbReference>
<dbReference type="GO" id="GO:0004831">
    <property type="term" value="F:tyrosine-tRNA ligase activity"/>
    <property type="evidence" value="ECO:0007669"/>
    <property type="project" value="UniProtKB-UniRule"/>
</dbReference>
<dbReference type="GO" id="GO:0006437">
    <property type="term" value="P:tyrosyl-tRNA aminoacylation"/>
    <property type="evidence" value="ECO:0007669"/>
    <property type="project" value="UniProtKB-UniRule"/>
</dbReference>
<dbReference type="CDD" id="cd00165">
    <property type="entry name" value="S4"/>
    <property type="match status" value="1"/>
</dbReference>
<dbReference type="CDD" id="cd00395">
    <property type="entry name" value="Tyr_Trp_RS_core"/>
    <property type="match status" value="1"/>
</dbReference>
<dbReference type="FunFam" id="1.10.240.10:FF:000001">
    <property type="entry name" value="Tyrosine--tRNA ligase"/>
    <property type="match status" value="1"/>
</dbReference>
<dbReference type="FunFam" id="3.40.50.620:FF:000008">
    <property type="entry name" value="Tyrosine--tRNA ligase"/>
    <property type="match status" value="1"/>
</dbReference>
<dbReference type="Gene3D" id="3.40.50.620">
    <property type="entry name" value="HUPs"/>
    <property type="match status" value="1"/>
</dbReference>
<dbReference type="Gene3D" id="3.10.290.10">
    <property type="entry name" value="RNA-binding S4 domain"/>
    <property type="match status" value="1"/>
</dbReference>
<dbReference type="Gene3D" id="1.10.240.10">
    <property type="entry name" value="Tyrosyl-Transfer RNA Synthetase"/>
    <property type="match status" value="1"/>
</dbReference>
<dbReference type="HAMAP" id="MF_02006">
    <property type="entry name" value="Tyr_tRNA_synth_type1"/>
    <property type="match status" value="1"/>
</dbReference>
<dbReference type="InterPro" id="IPR001412">
    <property type="entry name" value="aa-tRNA-synth_I_CS"/>
</dbReference>
<dbReference type="InterPro" id="IPR002305">
    <property type="entry name" value="aa-tRNA-synth_Ic"/>
</dbReference>
<dbReference type="InterPro" id="IPR014729">
    <property type="entry name" value="Rossmann-like_a/b/a_fold"/>
</dbReference>
<dbReference type="InterPro" id="IPR002942">
    <property type="entry name" value="S4_RNA-bd"/>
</dbReference>
<dbReference type="InterPro" id="IPR036986">
    <property type="entry name" value="S4_RNA-bd_sf"/>
</dbReference>
<dbReference type="InterPro" id="IPR054608">
    <property type="entry name" value="SYY-like_C"/>
</dbReference>
<dbReference type="InterPro" id="IPR002307">
    <property type="entry name" value="Tyr-tRNA-ligase"/>
</dbReference>
<dbReference type="InterPro" id="IPR024088">
    <property type="entry name" value="Tyr-tRNA-ligase_bac-type"/>
</dbReference>
<dbReference type="InterPro" id="IPR024107">
    <property type="entry name" value="Tyr-tRNA-ligase_bac_1"/>
</dbReference>
<dbReference type="NCBIfam" id="TIGR00234">
    <property type="entry name" value="tyrS"/>
    <property type="match status" value="1"/>
</dbReference>
<dbReference type="PANTHER" id="PTHR11766:SF0">
    <property type="entry name" value="TYROSINE--TRNA LIGASE, MITOCHONDRIAL"/>
    <property type="match status" value="1"/>
</dbReference>
<dbReference type="PANTHER" id="PTHR11766">
    <property type="entry name" value="TYROSYL-TRNA SYNTHETASE"/>
    <property type="match status" value="1"/>
</dbReference>
<dbReference type="Pfam" id="PF22421">
    <property type="entry name" value="SYY_C-terminal"/>
    <property type="match status" value="1"/>
</dbReference>
<dbReference type="Pfam" id="PF00579">
    <property type="entry name" value="tRNA-synt_1b"/>
    <property type="match status" value="1"/>
</dbReference>
<dbReference type="PRINTS" id="PR01040">
    <property type="entry name" value="TRNASYNTHTYR"/>
</dbReference>
<dbReference type="SMART" id="SM00363">
    <property type="entry name" value="S4"/>
    <property type="match status" value="1"/>
</dbReference>
<dbReference type="SUPFAM" id="SSF55174">
    <property type="entry name" value="Alpha-L RNA-binding motif"/>
    <property type="match status" value="1"/>
</dbReference>
<dbReference type="SUPFAM" id="SSF52374">
    <property type="entry name" value="Nucleotidylyl transferase"/>
    <property type="match status" value="1"/>
</dbReference>
<dbReference type="PROSITE" id="PS00178">
    <property type="entry name" value="AA_TRNA_LIGASE_I"/>
    <property type="match status" value="1"/>
</dbReference>
<dbReference type="PROSITE" id="PS50889">
    <property type="entry name" value="S4"/>
    <property type="match status" value="1"/>
</dbReference>
<organism>
    <name type="scientific">Bacillus licheniformis (strain ATCC 14580 / DSM 13 / JCM 2505 / CCUG 7422 / NBRC 12200 / NCIMB 9375 / NCTC 10341 / NRRL NRS-1264 / Gibson 46)</name>
    <dbReference type="NCBI Taxonomy" id="279010"/>
    <lineage>
        <taxon>Bacteria</taxon>
        <taxon>Bacillati</taxon>
        <taxon>Bacillota</taxon>
        <taxon>Bacilli</taxon>
        <taxon>Bacillales</taxon>
        <taxon>Bacillaceae</taxon>
        <taxon>Bacillus</taxon>
    </lineage>
</organism>
<name>SYY1_BACLD</name>
<gene>
    <name evidence="1" type="primary">tyrS1</name>
    <name type="ordered locus">BLi03118</name>
    <name type="ordered locus">BL00439</name>
</gene>
<comment type="function">
    <text evidence="1">Catalyzes the attachment of tyrosine to tRNA(Tyr) in a two-step reaction: tyrosine is first activated by ATP to form Tyr-AMP and then transferred to the acceptor end of tRNA(Tyr).</text>
</comment>
<comment type="catalytic activity">
    <reaction evidence="1">
        <text>tRNA(Tyr) + L-tyrosine + ATP = L-tyrosyl-tRNA(Tyr) + AMP + diphosphate + H(+)</text>
        <dbReference type="Rhea" id="RHEA:10220"/>
        <dbReference type="Rhea" id="RHEA-COMP:9706"/>
        <dbReference type="Rhea" id="RHEA-COMP:9707"/>
        <dbReference type="ChEBI" id="CHEBI:15378"/>
        <dbReference type="ChEBI" id="CHEBI:30616"/>
        <dbReference type="ChEBI" id="CHEBI:33019"/>
        <dbReference type="ChEBI" id="CHEBI:58315"/>
        <dbReference type="ChEBI" id="CHEBI:78442"/>
        <dbReference type="ChEBI" id="CHEBI:78536"/>
        <dbReference type="ChEBI" id="CHEBI:456215"/>
        <dbReference type="EC" id="6.1.1.1"/>
    </reaction>
</comment>
<comment type="subunit">
    <text evidence="1">Homodimer.</text>
</comment>
<comment type="subcellular location">
    <subcellularLocation>
        <location evidence="1">Cytoplasm</location>
    </subcellularLocation>
</comment>
<comment type="similarity">
    <text evidence="1">Belongs to the class-I aminoacyl-tRNA synthetase family. TyrS type 1 subfamily.</text>
</comment>
<comment type="sequence caution" evidence="2">
    <conflict type="erroneous initiation">
        <sequence resource="EMBL-CDS" id="AAU24620"/>
    </conflict>
</comment>
<comment type="sequence caution" evidence="2">
    <conflict type="erroneous initiation">
        <sequence resource="EMBL-CDS" id="AAU41979"/>
    </conflict>
</comment>